<evidence type="ECO:0000250" key="1"/>
<evidence type="ECO:0000255" key="2"/>
<evidence type="ECO:0000255" key="3">
    <source>
        <dbReference type="PROSITE-ProRule" id="PRU01240"/>
    </source>
</evidence>
<evidence type="ECO:0000269" key="4">
    <source>
    </source>
</evidence>
<evidence type="ECO:0000305" key="5"/>
<gene>
    <name type="primary">SUB6</name>
</gene>
<keyword id="KW-0020">Allergen</keyword>
<keyword id="KW-0325">Glycoprotein</keyword>
<keyword id="KW-0378">Hydrolase</keyword>
<keyword id="KW-0645">Protease</keyword>
<keyword id="KW-0964">Secreted</keyword>
<keyword id="KW-0720">Serine protease</keyword>
<keyword id="KW-0732">Signal</keyword>
<keyword id="KW-0843">Virulence</keyword>
<keyword id="KW-0865">Zymogen</keyword>
<dbReference type="EC" id="3.4.21.-"/>
<dbReference type="EMBL" id="AF082515">
    <property type="protein sequence ID" value="AAD52013.1"/>
    <property type="molecule type" value="mRNA"/>
</dbReference>
<dbReference type="EMBL" id="AF420485">
    <property type="protein sequence ID" value="AAN32713.1"/>
    <property type="molecule type" value="Genomic_DNA"/>
</dbReference>
<dbReference type="EMBL" id="AY525330">
    <property type="protein sequence ID" value="AAS19460.1"/>
    <property type="molecule type" value="Genomic_DNA"/>
</dbReference>
<dbReference type="SMR" id="Q9UW97"/>
<dbReference type="Allergome" id="3505">
    <property type="allergen name" value="Tri r 2.0101"/>
</dbReference>
<dbReference type="Allergome" id="652">
    <property type="allergen name" value="Tri r 2"/>
</dbReference>
<dbReference type="GlyCosmos" id="Q9UW97">
    <property type="glycosylation" value="5 sites, No reported glycans"/>
</dbReference>
<dbReference type="VEuPathDB" id="FungiDB:TERG_02990"/>
<dbReference type="OMA" id="YGMSGIN"/>
<dbReference type="GO" id="GO:0005576">
    <property type="term" value="C:extracellular region"/>
    <property type="evidence" value="ECO:0007669"/>
    <property type="project" value="UniProtKB-SubCell"/>
</dbReference>
<dbReference type="GO" id="GO:0004252">
    <property type="term" value="F:serine-type endopeptidase activity"/>
    <property type="evidence" value="ECO:0007669"/>
    <property type="project" value="InterPro"/>
</dbReference>
<dbReference type="GO" id="GO:0006508">
    <property type="term" value="P:proteolysis"/>
    <property type="evidence" value="ECO:0007669"/>
    <property type="project" value="UniProtKB-KW"/>
</dbReference>
<dbReference type="CDD" id="cd04077">
    <property type="entry name" value="Peptidases_S8_PCSK9_ProteinaseK_like"/>
    <property type="match status" value="1"/>
</dbReference>
<dbReference type="FunFam" id="3.40.50.200:FF:000014">
    <property type="entry name" value="Proteinase K"/>
    <property type="match status" value="1"/>
</dbReference>
<dbReference type="Gene3D" id="3.30.70.80">
    <property type="entry name" value="Peptidase S8 propeptide/proteinase inhibitor I9"/>
    <property type="match status" value="1"/>
</dbReference>
<dbReference type="Gene3D" id="3.40.50.200">
    <property type="entry name" value="Peptidase S8/S53 domain"/>
    <property type="match status" value="1"/>
</dbReference>
<dbReference type="InterPro" id="IPR034193">
    <property type="entry name" value="PCSK9_ProteinaseK-like"/>
</dbReference>
<dbReference type="InterPro" id="IPR000209">
    <property type="entry name" value="Peptidase_S8/S53_dom"/>
</dbReference>
<dbReference type="InterPro" id="IPR036852">
    <property type="entry name" value="Peptidase_S8/S53_dom_sf"/>
</dbReference>
<dbReference type="InterPro" id="IPR023827">
    <property type="entry name" value="Peptidase_S8_Asp-AS"/>
</dbReference>
<dbReference type="InterPro" id="IPR022398">
    <property type="entry name" value="Peptidase_S8_His-AS"/>
</dbReference>
<dbReference type="InterPro" id="IPR023828">
    <property type="entry name" value="Peptidase_S8_Ser-AS"/>
</dbReference>
<dbReference type="InterPro" id="IPR050131">
    <property type="entry name" value="Peptidase_S8_subtilisin-like"/>
</dbReference>
<dbReference type="InterPro" id="IPR015500">
    <property type="entry name" value="Peptidase_S8_subtilisin-rel"/>
</dbReference>
<dbReference type="InterPro" id="IPR010259">
    <property type="entry name" value="S8pro/Inhibitor_I9"/>
</dbReference>
<dbReference type="InterPro" id="IPR037045">
    <property type="entry name" value="S8pro/Inhibitor_I9_sf"/>
</dbReference>
<dbReference type="PANTHER" id="PTHR43806:SF11">
    <property type="entry name" value="CEREVISIN-RELATED"/>
    <property type="match status" value="1"/>
</dbReference>
<dbReference type="PANTHER" id="PTHR43806">
    <property type="entry name" value="PEPTIDASE S8"/>
    <property type="match status" value="1"/>
</dbReference>
<dbReference type="Pfam" id="PF05922">
    <property type="entry name" value="Inhibitor_I9"/>
    <property type="match status" value="1"/>
</dbReference>
<dbReference type="Pfam" id="PF00082">
    <property type="entry name" value="Peptidase_S8"/>
    <property type="match status" value="1"/>
</dbReference>
<dbReference type="PRINTS" id="PR00723">
    <property type="entry name" value="SUBTILISIN"/>
</dbReference>
<dbReference type="SUPFAM" id="SSF54897">
    <property type="entry name" value="Protease propeptides/inhibitors"/>
    <property type="match status" value="1"/>
</dbReference>
<dbReference type="SUPFAM" id="SSF52743">
    <property type="entry name" value="Subtilisin-like"/>
    <property type="match status" value="1"/>
</dbReference>
<dbReference type="PROSITE" id="PS51892">
    <property type="entry name" value="SUBTILASE"/>
    <property type="match status" value="1"/>
</dbReference>
<dbReference type="PROSITE" id="PS00136">
    <property type="entry name" value="SUBTILASE_ASP"/>
    <property type="match status" value="1"/>
</dbReference>
<dbReference type="PROSITE" id="PS00137">
    <property type="entry name" value="SUBTILASE_HIS"/>
    <property type="match status" value="1"/>
</dbReference>
<dbReference type="PROSITE" id="PS00138">
    <property type="entry name" value="SUBTILASE_SER"/>
    <property type="match status" value="1"/>
</dbReference>
<reference key="1">
    <citation type="journal article" date="1998" name="J. Biol. Chem.">
        <title>Trichophyton antigens associated with IgE antibodies and delayed type hypersensitivity. Sequence homology to two families of serine proteinases.</title>
        <authorList>
            <person name="Woodfolk J.A."/>
            <person name="Wheatley L.M."/>
            <person name="Piyasena R.V."/>
            <person name="Benjamin D.C."/>
            <person name="Platts-Mills T.A.E."/>
        </authorList>
    </citation>
    <scope>NUCLEOTIDE SEQUENCE [MRNA]</scope>
</reference>
<reference key="2">
    <citation type="journal article" date="2004" name="J. Clin. Microbiol.">
        <title>Cloning and characterization of Trichophyton rubrum genes encoding actin, Tri r2, and Tri r4.</title>
        <authorList>
            <person name="Gao J."/>
            <person name="Takashima A."/>
        </authorList>
    </citation>
    <scope>NUCLEOTIDE SEQUENCE [GENOMIC DNA]</scope>
    <source>
        <strain>ATCC 14001</strain>
    </source>
</reference>
<reference key="3">
    <citation type="submission" date="2001-09" db="EMBL/GenBank/DDBJ databases">
        <title>Trichophyton rubrum encoding alkaline protease.</title>
        <authorList>
            <person name="Capoccia S."/>
            <person name="Lechenne B."/>
            <person name="Zaugg C."/>
            <person name="Monod M."/>
        </authorList>
    </citation>
    <scope>NUCLEOTIDE SEQUENCE [GENOMIC DNA]</scope>
</reference>
<reference key="4">
    <citation type="journal article" date="2009" name="Eukaryot. Cell">
        <title>Gene expression profiling in the human pathogenic dermatophyte Trichophyton rubrum during growth on proteins.</title>
        <authorList>
            <person name="Zaugg C."/>
            <person name="Monod M."/>
            <person name="Weber J."/>
            <person name="Harshman K."/>
            <person name="Pradervand S."/>
            <person name="Thomas J."/>
            <person name="Bueno M."/>
            <person name="Giddey K."/>
            <person name="Staib P."/>
        </authorList>
    </citation>
    <scope>INDUCTION</scope>
</reference>
<sequence>MGFITKAIPIVLAALSTVNGARILEAGPHAEAIPNKYIVVMKREVSDEAFNAHTTWLSQSLNSRIMRRAGSSKPMAGMQDKYSLGGIFRAYSGEFDDAMIKDISSHDDVDFIEPDFVVRTTTNGTNLTHQDNVPSWGLARVGSKKPGGTTYYYDPSAGKGVTAYIIDTGIDIDHEDFQGRAKWGENFVDQQNTDCNGHGTHVAGTVGGTKYGLAKGVSLVAVKVLDCDGSGSNSGVIKGMEWAMRQASGGGNGTAKAAGKSVMNMSLGGPRSEASNQAAKAISDAGIFMAVAAGNENMDAQHSSPASEPSVCTVAASTKDDGKADFSNYGAVVDVYAPGKDITSLKPGGSTDTLSGTSMASPHVCGLGAYLIGLGKQGGPGLCDTIKKMANDVIQSPGEGTTGKLIYNGSGK</sequence>
<protein>
    <recommendedName>
        <fullName>Subtilisin-like protease 6</fullName>
        <ecNumber>3.4.21.-</ecNumber>
    </recommendedName>
    <allergenName>Tri r 2</allergenName>
</protein>
<feature type="signal peptide" evidence="2">
    <location>
        <begin position="1"/>
        <end position="20"/>
    </location>
</feature>
<feature type="propeptide" id="PRO_0000380810" evidence="1">
    <location>
        <begin position="21"/>
        <end position="126"/>
    </location>
</feature>
<feature type="chain" id="PRO_0000380811" description="Subtilisin-like protease 6">
    <location>
        <begin position="127"/>
        <end position="412"/>
    </location>
</feature>
<feature type="domain" description="Inhibitor I9" evidence="2">
    <location>
        <begin position="36"/>
        <end position="120"/>
    </location>
</feature>
<feature type="domain" description="Peptidase S8" evidence="3">
    <location>
        <begin position="135"/>
        <end position="412"/>
    </location>
</feature>
<feature type="active site" description="Charge relay system" evidence="3">
    <location>
        <position position="167"/>
    </location>
</feature>
<feature type="active site" description="Charge relay system" evidence="3">
    <location>
        <position position="198"/>
    </location>
</feature>
<feature type="active site" description="Charge relay system" evidence="3">
    <location>
        <position position="358"/>
    </location>
</feature>
<feature type="glycosylation site" description="N-linked (GlcNAc...) asparagine" evidence="2">
    <location>
        <position position="123"/>
    </location>
</feature>
<feature type="glycosylation site" description="N-linked (GlcNAc...) asparagine" evidence="2">
    <location>
        <position position="126"/>
    </location>
</feature>
<feature type="glycosylation site" description="N-linked (GlcNAc...) asparagine" evidence="2">
    <location>
        <position position="252"/>
    </location>
</feature>
<feature type="glycosylation site" description="N-linked (GlcNAc...) asparagine" evidence="2">
    <location>
        <position position="264"/>
    </location>
</feature>
<feature type="glycosylation site" description="N-linked (GlcNAc...) asparagine" evidence="2">
    <location>
        <position position="408"/>
    </location>
</feature>
<name>SUB6_TRIRU</name>
<proteinExistence type="evidence at protein level"/>
<organism>
    <name type="scientific">Trichophyton rubrum</name>
    <name type="common">Athlete's foot fungus</name>
    <name type="synonym">Epidermophyton rubrum</name>
    <dbReference type="NCBI Taxonomy" id="5551"/>
    <lineage>
        <taxon>Eukaryota</taxon>
        <taxon>Fungi</taxon>
        <taxon>Dikarya</taxon>
        <taxon>Ascomycota</taxon>
        <taxon>Pezizomycotina</taxon>
        <taxon>Eurotiomycetes</taxon>
        <taxon>Eurotiomycetidae</taxon>
        <taxon>Onygenales</taxon>
        <taxon>Arthrodermataceae</taxon>
        <taxon>Trichophyton</taxon>
    </lineage>
</organism>
<comment type="function">
    <text evidence="1">Secreted subtilisin-like serine protease with keratinolytic activity that contributes to pathogenicity.</text>
</comment>
<comment type="subcellular location">
    <subcellularLocation>
        <location>Secreted</location>
    </subcellularLocation>
</comment>
<comment type="induction">
    <text evidence="4">Expression is strongly increased during growth on protein-rich medium.</text>
</comment>
<comment type="allergen">
    <text>Causes an allergic reaction in human. Binds to IgE.</text>
</comment>
<comment type="similarity">
    <text evidence="5">Belongs to the peptidase S8 family.</text>
</comment>
<accession>Q9UW97</accession>